<comment type="function">
    <text evidence="1">This protein binds to 23S rRNA in the presence of protein L20.</text>
</comment>
<comment type="subunit">
    <text evidence="1">Part of the 50S ribosomal subunit. Contacts protein L20.</text>
</comment>
<comment type="similarity">
    <text evidence="1">Belongs to the bacterial ribosomal protein bL21 family.</text>
</comment>
<name>RL21_PEDPA</name>
<keyword id="KW-0687">Ribonucleoprotein</keyword>
<keyword id="KW-0689">Ribosomal protein</keyword>
<keyword id="KW-0694">RNA-binding</keyword>
<keyword id="KW-0699">rRNA-binding</keyword>
<reference key="1">
    <citation type="journal article" date="2006" name="Proc. Natl. Acad. Sci. U.S.A.">
        <title>Comparative genomics of the lactic acid bacteria.</title>
        <authorList>
            <person name="Makarova K.S."/>
            <person name="Slesarev A."/>
            <person name="Wolf Y.I."/>
            <person name="Sorokin A."/>
            <person name="Mirkin B."/>
            <person name="Koonin E.V."/>
            <person name="Pavlov A."/>
            <person name="Pavlova N."/>
            <person name="Karamychev V."/>
            <person name="Polouchine N."/>
            <person name="Shakhova V."/>
            <person name="Grigoriev I."/>
            <person name="Lou Y."/>
            <person name="Rohksar D."/>
            <person name="Lucas S."/>
            <person name="Huang K."/>
            <person name="Goodstein D.M."/>
            <person name="Hawkins T."/>
            <person name="Plengvidhya V."/>
            <person name="Welker D."/>
            <person name="Hughes J."/>
            <person name="Goh Y."/>
            <person name="Benson A."/>
            <person name="Baldwin K."/>
            <person name="Lee J.-H."/>
            <person name="Diaz-Muniz I."/>
            <person name="Dosti B."/>
            <person name="Smeianov V."/>
            <person name="Wechter W."/>
            <person name="Barabote R."/>
            <person name="Lorca G."/>
            <person name="Altermann E."/>
            <person name="Barrangou R."/>
            <person name="Ganesan B."/>
            <person name="Xie Y."/>
            <person name="Rawsthorne H."/>
            <person name="Tamir D."/>
            <person name="Parker C."/>
            <person name="Breidt F."/>
            <person name="Broadbent J.R."/>
            <person name="Hutkins R."/>
            <person name="O'Sullivan D."/>
            <person name="Steele J."/>
            <person name="Unlu G."/>
            <person name="Saier M.H. Jr."/>
            <person name="Klaenhammer T."/>
            <person name="Richardson P."/>
            <person name="Kozyavkin S."/>
            <person name="Weimer B.C."/>
            <person name="Mills D.A."/>
        </authorList>
    </citation>
    <scope>NUCLEOTIDE SEQUENCE [LARGE SCALE GENOMIC DNA]</scope>
    <source>
        <strain>ATCC 25745 / CCUG 21536 / LMG 10740 / 183-1w</strain>
    </source>
</reference>
<organism>
    <name type="scientific">Pediococcus pentosaceus (strain ATCC 25745 / CCUG 21536 / LMG 10740 / 183-1w)</name>
    <dbReference type="NCBI Taxonomy" id="278197"/>
    <lineage>
        <taxon>Bacteria</taxon>
        <taxon>Bacillati</taxon>
        <taxon>Bacillota</taxon>
        <taxon>Bacilli</taxon>
        <taxon>Lactobacillales</taxon>
        <taxon>Lactobacillaceae</taxon>
        <taxon>Pediococcus</taxon>
    </lineage>
</organism>
<accession>Q03G01</accession>
<dbReference type="EMBL" id="CP000422">
    <property type="protein sequence ID" value="ABJ67871.1"/>
    <property type="molecule type" value="Genomic_DNA"/>
</dbReference>
<dbReference type="RefSeq" id="WP_002833539.1">
    <property type="nucleotide sequence ID" value="NC_008525.1"/>
</dbReference>
<dbReference type="SMR" id="Q03G01"/>
<dbReference type="STRING" id="278197.PEPE_0811"/>
<dbReference type="GeneID" id="33062855"/>
<dbReference type="KEGG" id="ppe:PEPE_0811"/>
<dbReference type="eggNOG" id="COG0261">
    <property type="taxonomic scope" value="Bacteria"/>
</dbReference>
<dbReference type="HOGENOM" id="CLU_061463_3_2_9"/>
<dbReference type="OrthoDB" id="9813334at2"/>
<dbReference type="Proteomes" id="UP000000773">
    <property type="component" value="Chromosome"/>
</dbReference>
<dbReference type="GO" id="GO:0005737">
    <property type="term" value="C:cytoplasm"/>
    <property type="evidence" value="ECO:0007669"/>
    <property type="project" value="UniProtKB-ARBA"/>
</dbReference>
<dbReference type="GO" id="GO:1990904">
    <property type="term" value="C:ribonucleoprotein complex"/>
    <property type="evidence" value="ECO:0007669"/>
    <property type="project" value="UniProtKB-KW"/>
</dbReference>
<dbReference type="GO" id="GO:0005840">
    <property type="term" value="C:ribosome"/>
    <property type="evidence" value="ECO:0007669"/>
    <property type="project" value="UniProtKB-KW"/>
</dbReference>
<dbReference type="GO" id="GO:0019843">
    <property type="term" value="F:rRNA binding"/>
    <property type="evidence" value="ECO:0007669"/>
    <property type="project" value="UniProtKB-UniRule"/>
</dbReference>
<dbReference type="GO" id="GO:0003735">
    <property type="term" value="F:structural constituent of ribosome"/>
    <property type="evidence" value="ECO:0007669"/>
    <property type="project" value="InterPro"/>
</dbReference>
<dbReference type="GO" id="GO:0006412">
    <property type="term" value="P:translation"/>
    <property type="evidence" value="ECO:0007669"/>
    <property type="project" value="UniProtKB-UniRule"/>
</dbReference>
<dbReference type="HAMAP" id="MF_01363">
    <property type="entry name" value="Ribosomal_bL21"/>
    <property type="match status" value="1"/>
</dbReference>
<dbReference type="InterPro" id="IPR028909">
    <property type="entry name" value="bL21-like"/>
</dbReference>
<dbReference type="InterPro" id="IPR036164">
    <property type="entry name" value="bL21-like_sf"/>
</dbReference>
<dbReference type="InterPro" id="IPR001787">
    <property type="entry name" value="Ribosomal_bL21"/>
</dbReference>
<dbReference type="InterPro" id="IPR018258">
    <property type="entry name" value="Ribosomal_bL21_CS"/>
</dbReference>
<dbReference type="NCBIfam" id="TIGR00061">
    <property type="entry name" value="L21"/>
    <property type="match status" value="1"/>
</dbReference>
<dbReference type="PANTHER" id="PTHR21349">
    <property type="entry name" value="50S RIBOSOMAL PROTEIN L21"/>
    <property type="match status" value="1"/>
</dbReference>
<dbReference type="PANTHER" id="PTHR21349:SF0">
    <property type="entry name" value="LARGE RIBOSOMAL SUBUNIT PROTEIN BL21M"/>
    <property type="match status" value="1"/>
</dbReference>
<dbReference type="Pfam" id="PF00829">
    <property type="entry name" value="Ribosomal_L21p"/>
    <property type="match status" value="1"/>
</dbReference>
<dbReference type="SUPFAM" id="SSF141091">
    <property type="entry name" value="L21p-like"/>
    <property type="match status" value="1"/>
</dbReference>
<dbReference type="PROSITE" id="PS01169">
    <property type="entry name" value="RIBOSOMAL_L21"/>
    <property type="match status" value="1"/>
</dbReference>
<protein>
    <recommendedName>
        <fullName evidence="1">Large ribosomal subunit protein bL21</fullName>
    </recommendedName>
    <alternativeName>
        <fullName evidence="2">50S ribosomal protein L21</fullName>
    </alternativeName>
</protein>
<sequence>MYAIIKTGGKQLKVEEGQSVFVEKLNVAEGEKVTFDQVLFVGGESTKVGSPVVEGASVAGTVEKQGKQKKITTFKYKAKKNQHTKTGHRQPYTKVMIDSINA</sequence>
<proteinExistence type="inferred from homology"/>
<gene>
    <name evidence="1" type="primary">rplU</name>
    <name type="ordered locus">PEPE_0811</name>
</gene>
<evidence type="ECO:0000255" key="1">
    <source>
        <dbReference type="HAMAP-Rule" id="MF_01363"/>
    </source>
</evidence>
<evidence type="ECO:0000305" key="2"/>
<feature type="chain" id="PRO_1000067868" description="Large ribosomal subunit protein bL21">
    <location>
        <begin position="1"/>
        <end position="102"/>
    </location>
</feature>